<gene>
    <name evidence="4" type="primary">argF</name>
    <name type="ordered locus">PA3537</name>
</gene>
<sequence length="305" mass="33925">MSVRHFLSFMDYSPEELIGLIRRGSELKDLRNRGVLYEPLKSRVLGMVFEKASTRTRLSFEAGMIQLGGQAIFLSPRDTQLGRGEPIGDSARVMSRMLDGVMIRTFAHATLTEFAAHSKVPVINGLSDDLHPCQLLADMQTFHEHRGSIQGKTVAWIGDGNNMCNSYIEAALKFDFQLRVACPEGYEPKAEFVALAGDRLRVVRDPREAVAGAHLVSTDVWASMGQEDEAAARIALFRPYQVNAALLDGAADDVLFMHCLPAHRGEEISEELLDDPRSVAWDQAENRLHAQKALLELLIEHAHYA</sequence>
<evidence type="ECO:0000255" key="1">
    <source>
        <dbReference type="HAMAP-Rule" id="MF_01109"/>
    </source>
</evidence>
<evidence type="ECO:0000269" key="2">
    <source>
    </source>
</evidence>
<evidence type="ECO:0000269" key="3">
    <source>
    </source>
</evidence>
<evidence type="ECO:0000303" key="4">
    <source>
    </source>
</evidence>
<evidence type="ECO:0000303" key="5">
    <source>
    </source>
</evidence>
<evidence type="ECO:0000305" key="6"/>
<evidence type="ECO:0000305" key="7">
    <source>
    </source>
</evidence>
<proteinExistence type="evidence at protein level"/>
<keyword id="KW-0028">Amino-acid biosynthesis</keyword>
<keyword id="KW-0055">Arginine biosynthesis</keyword>
<keyword id="KW-0963">Cytoplasm</keyword>
<keyword id="KW-0903">Direct protein sequencing</keyword>
<keyword id="KW-1185">Reference proteome</keyword>
<keyword id="KW-0808">Transferase</keyword>
<feature type="initiator methionine" description="Removed" evidence="2">
    <location>
        <position position="1"/>
    </location>
</feature>
<feature type="chain" id="PRO_0000112985" description="Ornithine carbamoyltransferase, anabolic">
    <location>
        <begin position="2"/>
        <end position="305"/>
    </location>
</feature>
<feature type="binding site" evidence="1">
    <location>
        <begin position="53"/>
        <end position="56"/>
    </location>
    <ligand>
        <name>carbamoyl phosphate</name>
        <dbReference type="ChEBI" id="CHEBI:58228"/>
    </ligand>
</feature>
<feature type="binding site" evidence="1">
    <location>
        <position position="80"/>
    </location>
    <ligand>
        <name>carbamoyl phosphate</name>
        <dbReference type="ChEBI" id="CHEBI:58228"/>
    </ligand>
</feature>
<feature type="binding site" evidence="1">
    <location>
        <position position="104"/>
    </location>
    <ligand>
        <name>carbamoyl phosphate</name>
        <dbReference type="ChEBI" id="CHEBI:58228"/>
    </ligand>
</feature>
<feature type="binding site" evidence="1">
    <location>
        <begin position="131"/>
        <end position="134"/>
    </location>
    <ligand>
        <name>carbamoyl phosphate</name>
        <dbReference type="ChEBI" id="CHEBI:58228"/>
    </ligand>
</feature>
<feature type="binding site" evidence="1">
    <location>
        <position position="162"/>
    </location>
    <ligand>
        <name>L-ornithine</name>
        <dbReference type="ChEBI" id="CHEBI:46911"/>
    </ligand>
</feature>
<feature type="binding site" evidence="1">
    <location>
        <position position="219"/>
    </location>
    <ligand>
        <name>L-ornithine</name>
        <dbReference type="ChEBI" id="CHEBI:46911"/>
    </ligand>
</feature>
<feature type="binding site" evidence="1">
    <location>
        <begin position="223"/>
        <end position="224"/>
    </location>
    <ligand>
        <name>L-ornithine</name>
        <dbReference type="ChEBI" id="CHEBI:46911"/>
    </ligand>
</feature>
<feature type="binding site" evidence="1">
    <location>
        <begin position="259"/>
        <end position="260"/>
    </location>
    <ligand>
        <name>carbamoyl phosphate</name>
        <dbReference type="ChEBI" id="CHEBI:58228"/>
    </ligand>
</feature>
<feature type="binding site" evidence="1">
    <location>
        <position position="287"/>
    </location>
    <ligand>
        <name>carbamoyl phosphate</name>
        <dbReference type="ChEBI" id="CHEBI:58228"/>
    </ligand>
</feature>
<feature type="sequence conflict" description="In Ref. 1; AAA25720." evidence="6" ref="1">
    <original>AAL</original>
    <variation>EEM</variation>
    <location>
        <begin position="170"/>
        <end position="172"/>
    </location>
</feature>
<feature type="sequence conflict" description="In Ref. 1; AAA25720." evidence="6" ref="1">
    <original>L</original>
    <variation>M</variation>
    <location>
        <position position="236"/>
    </location>
</feature>
<protein>
    <recommendedName>
        <fullName evidence="5">Ornithine carbamoyltransferase, anabolic</fullName>
        <shortName evidence="4">OTCase</shortName>
        <ecNumber evidence="1">2.1.3.3</ecNumber>
    </recommendedName>
</protein>
<name>OTCA_PSEAE</name>
<organism>
    <name type="scientific">Pseudomonas aeruginosa (strain ATCC 15692 / DSM 22644 / CIP 104116 / JCM 14847 / LMG 12228 / 1C / PRS 101 / PAO1)</name>
    <dbReference type="NCBI Taxonomy" id="208964"/>
    <lineage>
        <taxon>Bacteria</taxon>
        <taxon>Pseudomonadati</taxon>
        <taxon>Pseudomonadota</taxon>
        <taxon>Gammaproteobacteria</taxon>
        <taxon>Pseudomonadales</taxon>
        <taxon>Pseudomonadaceae</taxon>
        <taxon>Pseudomonas</taxon>
    </lineage>
</organism>
<dbReference type="EC" id="2.1.3.3" evidence="1"/>
<dbReference type="EMBL" id="M19939">
    <property type="protein sequence ID" value="AAA25720.1"/>
    <property type="molecule type" value="Genomic_DNA"/>
</dbReference>
<dbReference type="EMBL" id="AE004091">
    <property type="protein sequence ID" value="AAG06925.1"/>
    <property type="molecule type" value="Genomic_DNA"/>
</dbReference>
<dbReference type="PIR" id="A32013">
    <property type="entry name" value="OWPSAA"/>
</dbReference>
<dbReference type="PIR" id="E83203">
    <property type="entry name" value="E83203"/>
</dbReference>
<dbReference type="RefSeq" id="NP_252227.1">
    <property type="nucleotide sequence ID" value="NC_002516.2"/>
</dbReference>
<dbReference type="RefSeq" id="WP_003092090.1">
    <property type="nucleotide sequence ID" value="NZ_QZGE01000001.1"/>
</dbReference>
<dbReference type="SMR" id="P11724"/>
<dbReference type="STRING" id="208964.PA3537"/>
<dbReference type="PaxDb" id="208964-PA3537"/>
<dbReference type="DNASU" id="878793"/>
<dbReference type="GeneID" id="878793"/>
<dbReference type="KEGG" id="pae:PA3537"/>
<dbReference type="PATRIC" id="fig|208964.12.peg.3701"/>
<dbReference type="PseudoCAP" id="PA3537"/>
<dbReference type="HOGENOM" id="CLU_043846_3_2_6"/>
<dbReference type="InParanoid" id="P11724"/>
<dbReference type="OrthoDB" id="9802587at2"/>
<dbReference type="PhylomeDB" id="P11724"/>
<dbReference type="BioCyc" id="PAER208964:G1FZ6-3605-MONOMER"/>
<dbReference type="SABIO-RK" id="P11724"/>
<dbReference type="UniPathway" id="UPA00068">
    <property type="reaction ID" value="UER00112"/>
</dbReference>
<dbReference type="Proteomes" id="UP000002438">
    <property type="component" value="Chromosome"/>
</dbReference>
<dbReference type="GO" id="GO:0005737">
    <property type="term" value="C:cytoplasm"/>
    <property type="evidence" value="ECO:0007669"/>
    <property type="project" value="UniProtKB-SubCell"/>
</dbReference>
<dbReference type="GO" id="GO:0016597">
    <property type="term" value="F:amino acid binding"/>
    <property type="evidence" value="ECO:0007669"/>
    <property type="project" value="InterPro"/>
</dbReference>
<dbReference type="GO" id="GO:0004585">
    <property type="term" value="F:ornithine carbamoyltransferase activity"/>
    <property type="evidence" value="ECO:0000318"/>
    <property type="project" value="GO_Central"/>
</dbReference>
<dbReference type="GO" id="GO:0042450">
    <property type="term" value="P:arginine biosynthetic process via ornithine"/>
    <property type="evidence" value="ECO:0000318"/>
    <property type="project" value="GO_Central"/>
</dbReference>
<dbReference type="GO" id="GO:0019240">
    <property type="term" value="P:citrulline biosynthetic process"/>
    <property type="evidence" value="ECO:0000318"/>
    <property type="project" value="GO_Central"/>
</dbReference>
<dbReference type="GO" id="GO:0006526">
    <property type="term" value="P:L-arginine biosynthetic process"/>
    <property type="evidence" value="ECO:0007669"/>
    <property type="project" value="UniProtKB-UniRule"/>
</dbReference>
<dbReference type="FunFam" id="3.40.50.1370:FF:000008">
    <property type="entry name" value="Ornithine carbamoyltransferase"/>
    <property type="match status" value="1"/>
</dbReference>
<dbReference type="FunFam" id="3.40.50.1370:FF:000024">
    <property type="entry name" value="Ornithine carbamoyltransferase"/>
    <property type="match status" value="1"/>
</dbReference>
<dbReference type="Gene3D" id="3.40.50.1370">
    <property type="entry name" value="Aspartate/ornithine carbamoyltransferase"/>
    <property type="match status" value="2"/>
</dbReference>
<dbReference type="HAMAP" id="MF_01109">
    <property type="entry name" value="OTCase"/>
    <property type="match status" value="1"/>
</dbReference>
<dbReference type="InterPro" id="IPR006132">
    <property type="entry name" value="Asp/Orn_carbamoyltranf_P-bd"/>
</dbReference>
<dbReference type="InterPro" id="IPR006130">
    <property type="entry name" value="Asp/Orn_carbamoylTrfase"/>
</dbReference>
<dbReference type="InterPro" id="IPR036901">
    <property type="entry name" value="Asp/Orn_carbamoylTrfase_sf"/>
</dbReference>
<dbReference type="InterPro" id="IPR006131">
    <property type="entry name" value="Asp_carbamoyltransf_Asp/Orn-bd"/>
</dbReference>
<dbReference type="InterPro" id="IPR002292">
    <property type="entry name" value="Orn/put_carbamltrans"/>
</dbReference>
<dbReference type="InterPro" id="IPR024904">
    <property type="entry name" value="OTCase_ArgI"/>
</dbReference>
<dbReference type="NCBIfam" id="TIGR00658">
    <property type="entry name" value="orni_carb_tr"/>
    <property type="match status" value="1"/>
</dbReference>
<dbReference type="NCBIfam" id="NF001986">
    <property type="entry name" value="PRK00779.1"/>
    <property type="match status" value="1"/>
</dbReference>
<dbReference type="PANTHER" id="PTHR45753">
    <property type="entry name" value="ORNITHINE CARBAMOYLTRANSFERASE, MITOCHONDRIAL"/>
    <property type="match status" value="1"/>
</dbReference>
<dbReference type="PANTHER" id="PTHR45753:SF3">
    <property type="entry name" value="ORNITHINE TRANSCARBAMYLASE, MITOCHONDRIAL"/>
    <property type="match status" value="1"/>
</dbReference>
<dbReference type="Pfam" id="PF00185">
    <property type="entry name" value="OTCace"/>
    <property type="match status" value="1"/>
</dbReference>
<dbReference type="Pfam" id="PF02729">
    <property type="entry name" value="OTCace_N"/>
    <property type="match status" value="1"/>
</dbReference>
<dbReference type="PRINTS" id="PR00100">
    <property type="entry name" value="AOTCASE"/>
</dbReference>
<dbReference type="PRINTS" id="PR00102">
    <property type="entry name" value="OTCASE"/>
</dbReference>
<dbReference type="SUPFAM" id="SSF53671">
    <property type="entry name" value="Aspartate/ornithine carbamoyltransferase"/>
    <property type="match status" value="1"/>
</dbReference>
<dbReference type="PROSITE" id="PS00097">
    <property type="entry name" value="CARBAMOYLTRANSFERASE"/>
    <property type="match status" value="1"/>
</dbReference>
<reference key="1">
    <citation type="journal article" date="1988" name="J. Bacteriol.">
        <title>Anabolic ornithine carbamoyltransferase of Pseudomonas aeruginosa: nucleotide sequence and transcriptional control of the argF structural gene.</title>
        <authorList>
            <person name="Itoh Y."/>
            <person name="Soldati L."/>
            <person name="Stalon V."/>
            <person name="Falmagne P."/>
            <person name="Terawaki Y."/>
            <person name="Leisinger T."/>
            <person name="Haas D."/>
        </authorList>
    </citation>
    <scope>NUCLEOTIDE SEQUENCE [GENOMIC DNA]</scope>
    <scope>PROTEIN SEQUENCE OF 2-38</scope>
    <source>
        <strain>PAO</strain>
    </source>
</reference>
<reference key="2">
    <citation type="journal article" date="2000" name="Nature">
        <title>Complete genome sequence of Pseudomonas aeruginosa PAO1, an opportunistic pathogen.</title>
        <authorList>
            <person name="Stover C.K."/>
            <person name="Pham X.-Q.T."/>
            <person name="Erwin A.L."/>
            <person name="Mizoguchi S.D."/>
            <person name="Warrener P."/>
            <person name="Hickey M.J."/>
            <person name="Brinkman F.S.L."/>
            <person name="Hufnagle W.O."/>
            <person name="Kowalik D.J."/>
            <person name="Lagrou M."/>
            <person name="Garber R.L."/>
            <person name="Goltry L."/>
            <person name="Tolentino E."/>
            <person name="Westbrock-Wadman S."/>
            <person name="Yuan Y."/>
            <person name="Brody L.L."/>
            <person name="Coulter S.N."/>
            <person name="Folger K.R."/>
            <person name="Kas A."/>
            <person name="Larbig K."/>
            <person name="Lim R.M."/>
            <person name="Smith K.A."/>
            <person name="Spencer D.H."/>
            <person name="Wong G.K.-S."/>
            <person name="Wu Z."/>
            <person name="Paulsen I.T."/>
            <person name="Reizer J."/>
            <person name="Saier M.H. Jr."/>
            <person name="Hancock R.E.W."/>
            <person name="Lory S."/>
            <person name="Olson M.V."/>
        </authorList>
    </citation>
    <scope>NUCLEOTIDE SEQUENCE [LARGE SCALE GENOMIC DNA]</scope>
    <source>
        <strain>ATCC 15692 / DSM 22644 / CIP 104116 / JCM 14847 / LMG 12228 / 1C / PRS 101 / PAO1</strain>
    </source>
</reference>
<reference key="3">
    <citation type="journal article" date="1967" name="Biochim. Biophys. Acta">
        <title>The occurrence of a catabolic and an anabolic ornithine carbamoyltransferase in Pseudomonas.</title>
        <authorList>
            <person name="Stalon V."/>
            <person name="Ramos F."/>
            <person name="Pierard A."/>
            <person name="Wiame J.M."/>
        </authorList>
    </citation>
    <scope>FUNCTION AS AN ANABOLIC OTCASE</scope>
    <scope>BIOPHYSICOCHEMICAL PROPERTIES</scope>
    <scope>SUBUNIT</scope>
</reference>
<comment type="function">
    <text evidence="3">Reversibly catalyzes the transfer of the carbamoyl group from carbamoyl phosphate (CP) to the N(epsilon) atom of ornithine (ORN) to produce L-citrulline, which is a substrate for argininosuccinate synthetase (ArgG) involved in the final step in arginine biosynthesis.</text>
</comment>
<comment type="catalytic activity">
    <reaction evidence="1">
        <text>carbamoyl phosphate + L-ornithine = L-citrulline + phosphate + H(+)</text>
        <dbReference type="Rhea" id="RHEA:19513"/>
        <dbReference type="ChEBI" id="CHEBI:15378"/>
        <dbReference type="ChEBI" id="CHEBI:43474"/>
        <dbReference type="ChEBI" id="CHEBI:46911"/>
        <dbReference type="ChEBI" id="CHEBI:57743"/>
        <dbReference type="ChEBI" id="CHEBI:58228"/>
        <dbReference type="EC" id="2.1.3.3"/>
    </reaction>
</comment>
<comment type="biophysicochemical properties">
    <phDependence>
        <text evidence="3">Optimum pH is between 8.5 and 9.</text>
    </phDependence>
</comment>
<comment type="pathway">
    <text evidence="7">Amino-acid biosynthesis; L-arginine biosynthesis; L-arginine from L-ornithine and carbamoyl phosphate: step 1/3.</text>
</comment>
<comment type="subunit">
    <text evidence="3">Homotrimer.</text>
</comment>
<comment type="subcellular location">
    <subcellularLocation>
        <location evidence="6">Cytoplasm</location>
    </subcellularLocation>
</comment>
<comment type="similarity">
    <text evidence="6">Belongs to the aspartate/ornithine carbamoyltransferase superfamily. OTCase family.</text>
</comment>
<accession>P11724</accession>